<accession>Q83SC8</accession>
<accession>Q7C2U5</accession>
<gene>
    <name evidence="2" type="primary">folD</name>
    <name type="ordered locus">SF0460</name>
    <name type="ordered locus">S0468</name>
</gene>
<protein>
    <recommendedName>
        <fullName evidence="2">Bifunctional protein FolD</fullName>
    </recommendedName>
    <domain>
        <recommendedName>
            <fullName evidence="2">Methylenetetrahydrofolate dehydrogenase</fullName>
            <ecNumber evidence="2">1.5.1.5</ecNumber>
        </recommendedName>
    </domain>
    <domain>
        <recommendedName>
            <fullName evidence="2">Methenyltetrahydrofolate cyclohydrolase</fullName>
            <ecNumber evidence="2">3.5.4.9</ecNumber>
        </recommendedName>
    </domain>
</protein>
<feature type="initiator methionine" description="Removed" evidence="1">
    <location>
        <position position="1"/>
    </location>
</feature>
<feature type="chain" id="PRO_0000268499" description="Bifunctional protein FolD">
    <location>
        <begin position="2"/>
        <end position="288"/>
    </location>
</feature>
<feature type="binding site" evidence="2">
    <location>
        <begin position="166"/>
        <end position="168"/>
    </location>
    <ligand>
        <name>NADP(+)</name>
        <dbReference type="ChEBI" id="CHEBI:58349"/>
    </ligand>
</feature>
<feature type="binding site" evidence="2">
    <location>
        <position position="232"/>
    </location>
    <ligand>
        <name>NADP(+)</name>
        <dbReference type="ChEBI" id="CHEBI:58349"/>
    </ligand>
</feature>
<organism>
    <name type="scientific">Shigella flexneri</name>
    <dbReference type="NCBI Taxonomy" id="623"/>
    <lineage>
        <taxon>Bacteria</taxon>
        <taxon>Pseudomonadati</taxon>
        <taxon>Pseudomonadota</taxon>
        <taxon>Gammaproteobacteria</taxon>
        <taxon>Enterobacterales</taxon>
        <taxon>Enterobacteriaceae</taxon>
        <taxon>Shigella</taxon>
    </lineage>
</organism>
<sequence>MAAKIIDGKTIAQQVRSEVAQKVQARIAAGLRAPGLAVVLVGSNPASQIYVASKRKACEEVGFVSRSYDLPETTSEAELLELIDALNADNTIDGILVQLPLPAGIDNVKVLERIHPDKDVDGFHPYNVGRLCQRAPRLRPCTPRGIVTLLERYNIDTFGLNAVVIGASNIVGRPMSMELLLAGCTTTVTHRFTKNLRHHVENADLLIVAVGKPGFIPGDWIKEGAIVIDVGINRLENGKVVGDVVFEDAAKRASYITPVPGGVGPMTVATLIENTLQACVEYHDPQGE</sequence>
<reference key="1">
    <citation type="journal article" date="2002" name="Nucleic Acids Res.">
        <title>Genome sequence of Shigella flexneri 2a: insights into pathogenicity through comparison with genomes of Escherichia coli K12 and O157.</title>
        <authorList>
            <person name="Jin Q."/>
            <person name="Yuan Z."/>
            <person name="Xu J."/>
            <person name="Wang Y."/>
            <person name="Shen Y."/>
            <person name="Lu W."/>
            <person name="Wang J."/>
            <person name="Liu H."/>
            <person name="Yang J."/>
            <person name="Yang F."/>
            <person name="Zhang X."/>
            <person name="Zhang J."/>
            <person name="Yang G."/>
            <person name="Wu H."/>
            <person name="Qu D."/>
            <person name="Dong J."/>
            <person name="Sun L."/>
            <person name="Xue Y."/>
            <person name="Zhao A."/>
            <person name="Gao Y."/>
            <person name="Zhu J."/>
            <person name="Kan B."/>
            <person name="Ding K."/>
            <person name="Chen S."/>
            <person name="Cheng H."/>
            <person name="Yao Z."/>
            <person name="He B."/>
            <person name="Chen R."/>
            <person name="Ma D."/>
            <person name="Qiang B."/>
            <person name="Wen Y."/>
            <person name="Hou Y."/>
            <person name="Yu J."/>
        </authorList>
    </citation>
    <scope>NUCLEOTIDE SEQUENCE [LARGE SCALE GENOMIC DNA]</scope>
    <source>
        <strain>301 / Serotype 2a</strain>
    </source>
</reference>
<reference key="2">
    <citation type="journal article" date="2003" name="Infect. Immun.">
        <title>Complete genome sequence and comparative genomics of Shigella flexneri serotype 2a strain 2457T.</title>
        <authorList>
            <person name="Wei J."/>
            <person name="Goldberg M.B."/>
            <person name="Burland V."/>
            <person name="Venkatesan M.M."/>
            <person name="Deng W."/>
            <person name="Fournier G."/>
            <person name="Mayhew G.F."/>
            <person name="Plunkett G. III"/>
            <person name="Rose D.J."/>
            <person name="Darling A."/>
            <person name="Mau B."/>
            <person name="Perna N.T."/>
            <person name="Payne S.M."/>
            <person name="Runyen-Janecky L.J."/>
            <person name="Zhou S."/>
            <person name="Schwartz D.C."/>
            <person name="Blattner F.R."/>
        </authorList>
    </citation>
    <scope>NUCLEOTIDE SEQUENCE [LARGE SCALE GENOMIC DNA]</scope>
    <source>
        <strain>ATCC 700930 / 2457T / Serotype 2a</strain>
    </source>
</reference>
<name>FOLD_SHIFL</name>
<dbReference type="EC" id="1.5.1.5" evidence="2"/>
<dbReference type="EC" id="3.5.4.9" evidence="2"/>
<dbReference type="EMBL" id="AE005674">
    <property type="protein sequence ID" value="AAN42114.1"/>
    <property type="molecule type" value="Genomic_DNA"/>
</dbReference>
<dbReference type="EMBL" id="AE014073">
    <property type="protein sequence ID" value="AAP15990.1"/>
    <property type="molecule type" value="Genomic_DNA"/>
</dbReference>
<dbReference type="RefSeq" id="NP_706407.1">
    <property type="nucleotide sequence ID" value="NC_004337.2"/>
</dbReference>
<dbReference type="RefSeq" id="WP_000729155.1">
    <property type="nucleotide sequence ID" value="NZ_WPGW01000107.1"/>
</dbReference>
<dbReference type="SMR" id="Q83SC8"/>
<dbReference type="STRING" id="198214.SF0460"/>
<dbReference type="PaxDb" id="198214-SF0460"/>
<dbReference type="GeneID" id="1027744"/>
<dbReference type="GeneID" id="93776949"/>
<dbReference type="KEGG" id="sfl:SF0460"/>
<dbReference type="KEGG" id="sfx:S0468"/>
<dbReference type="PATRIC" id="fig|198214.7.peg.526"/>
<dbReference type="HOGENOM" id="CLU_034045_2_1_6"/>
<dbReference type="UniPathway" id="UPA00193"/>
<dbReference type="Proteomes" id="UP000001006">
    <property type="component" value="Chromosome"/>
</dbReference>
<dbReference type="Proteomes" id="UP000002673">
    <property type="component" value="Chromosome"/>
</dbReference>
<dbReference type="GO" id="GO:0005829">
    <property type="term" value="C:cytosol"/>
    <property type="evidence" value="ECO:0007669"/>
    <property type="project" value="TreeGrafter"/>
</dbReference>
<dbReference type="GO" id="GO:0004477">
    <property type="term" value="F:methenyltetrahydrofolate cyclohydrolase activity"/>
    <property type="evidence" value="ECO:0007669"/>
    <property type="project" value="UniProtKB-UniRule"/>
</dbReference>
<dbReference type="GO" id="GO:0004488">
    <property type="term" value="F:methylenetetrahydrofolate dehydrogenase (NADP+) activity"/>
    <property type="evidence" value="ECO:0007669"/>
    <property type="project" value="UniProtKB-UniRule"/>
</dbReference>
<dbReference type="GO" id="GO:0000105">
    <property type="term" value="P:L-histidine biosynthetic process"/>
    <property type="evidence" value="ECO:0007669"/>
    <property type="project" value="UniProtKB-KW"/>
</dbReference>
<dbReference type="GO" id="GO:0009086">
    <property type="term" value="P:methionine biosynthetic process"/>
    <property type="evidence" value="ECO:0007669"/>
    <property type="project" value="UniProtKB-KW"/>
</dbReference>
<dbReference type="GO" id="GO:0006164">
    <property type="term" value="P:purine nucleotide biosynthetic process"/>
    <property type="evidence" value="ECO:0007669"/>
    <property type="project" value="UniProtKB-KW"/>
</dbReference>
<dbReference type="GO" id="GO:0035999">
    <property type="term" value="P:tetrahydrofolate interconversion"/>
    <property type="evidence" value="ECO:0007669"/>
    <property type="project" value="UniProtKB-UniRule"/>
</dbReference>
<dbReference type="CDD" id="cd01080">
    <property type="entry name" value="NAD_bind_m-THF_DH_Cyclohyd"/>
    <property type="match status" value="1"/>
</dbReference>
<dbReference type="FunFam" id="3.40.50.10860:FF:000001">
    <property type="entry name" value="Bifunctional protein FolD"/>
    <property type="match status" value="1"/>
</dbReference>
<dbReference type="FunFam" id="3.40.50.720:FF:000006">
    <property type="entry name" value="Bifunctional protein FolD"/>
    <property type="match status" value="1"/>
</dbReference>
<dbReference type="Gene3D" id="3.40.50.10860">
    <property type="entry name" value="Leucine Dehydrogenase, chain A, domain 1"/>
    <property type="match status" value="1"/>
</dbReference>
<dbReference type="Gene3D" id="3.40.50.720">
    <property type="entry name" value="NAD(P)-binding Rossmann-like Domain"/>
    <property type="match status" value="1"/>
</dbReference>
<dbReference type="HAMAP" id="MF_01576">
    <property type="entry name" value="THF_DHG_CYH"/>
    <property type="match status" value="1"/>
</dbReference>
<dbReference type="InterPro" id="IPR046346">
    <property type="entry name" value="Aminoacid_DH-like_N_sf"/>
</dbReference>
<dbReference type="InterPro" id="IPR036291">
    <property type="entry name" value="NAD(P)-bd_dom_sf"/>
</dbReference>
<dbReference type="InterPro" id="IPR000672">
    <property type="entry name" value="THF_DH/CycHdrlase"/>
</dbReference>
<dbReference type="InterPro" id="IPR020630">
    <property type="entry name" value="THF_DH/CycHdrlase_cat_dom"/>
</dbReference>
<dbReference type="InterPro" id="IPR020867">
    <property type="entry name" value="THF_DH/CycHdrlase_CS"/>
</dbReference>
<dbReference type="InterPro" id="IPR020631">
    <property type="entry name" value="THF_DH/CycHdrlase_NAD-bd_dom"/>
</dbReference>
<dbReference type="NCBIfam" id="NF008058">
    <property type="entry name" value="PRK10792.1"/>
    <property type="match status" value="1"/>
</dbReference>
<dbReference type="NCBIfam" id="NF010783">
    <property type="entry name" value="PRK14186.1"/>
    <property type="match status" value="1"/>
</dbReference>
<dbReference type="PANTHER" id="PTHR48099:SF5">
    <property type="entry name" value="C-1-TETRAHYDROFOLATE SYNTHASE, CYTOPLASMIC"/>
    <property type="match status" value="1"/>
</dbReference>
<dbReference type="PANTHER" id="PTHR48099">
    <property type="entry name" value="C-1-TETRAHYDROFOLATE SYNTHASE, CYTOPLASMIC-RELATED"/>
    <property type="match status" value="1"/>
</dbReference>
<dbReference type="Pfam" id="PF00763">
    <property type="entry name" value="THF_DHG_CYH"/>
    <property type="match status" value="1"/>
</dbReference>
<dbReference type="Pfam" id="PF02882">
    <property type="entry name" value="THF_DHG_CYH_C"/>
    <property type="match status" value="1"/>
</dbReference>
<dbReference type="PRINTS" id="PR00085">
    <property type="entry name" value="THFDHDRGNASE"/>
</dbReference>
<dbReference type="SUPFAM" id="SSF53223">
    <property type="entry name" value="Aminoacid dehydrogenase-like, N-terminal domain"/>
    <property type="match status" value="1"/>
</dbReference>
<dbReference type="SUPFAM" id="SSF51735">
    <property type="entry name" value="NAD(P)-binding Rossmann-fold domains"/>
    <property type="match status" value="1"/>
</dbReference>
<dbReference type="PROSITE" id="PS00766">
    <property type="entry name" value="THF_DHG_CYH_1"/>
    <property type="match status" value="1"/>
</dbReference>
<dbReference type="PROSITE" id="PS00767">
    <property type="entry name" value="THF_DHG_CYH_2"/>
    <property type="match status" value="1"/>
</dbReference>
<comment type="function">
    <text evidence="2">Catalyzes the oxidation of 5,10-methylenetetrahydrofolate to 5,10-methenyltetrahydrofolate and then the hydrolysis of 5,10-methenyltetrahydrofolate to 10-formyltetrahydrofolate.</text>
</comment>
<comment type="catalytic activity">
    <reaction evidence="2">
        <text>(6R)-5,10-methylene-5,6,7,8-tetrahydrofolate + NADP(+) = (6R)-5,10-methenyltetrahydrofolate + NADPH</text>
        <dbReference type="Rhea" id="RHEA:22812"/>
        <dbReference type="ChEBI" id="CHEBI:15636"/>
        <dbReference type="ChEBI" id="CHEBI:57455"/>
        <dbReference type="ChEBI" id="CHEBI:57783"/>
        <dbReference type="ChEBI" id="CHEBI:58349"/>
        <dbReference type="EC" id="1.5.1.5"/>
    </reaction>
</comment>
<comment type="catalytic activity">
    <reaction evidence="2">
        <text>(6R)-5,10-methenyltetrahydrofolate + H2O = (6R)-10-formyltetrahydrofolate + H(+)</text>
        <dbReference type="Rhea" id="RHEA:23700"/>
        <dbReference type="ChEBI" id="CHEBI:15377"/>
        <dbReference type="ChEBI" id="CHEBI:15378"/>
        <dbReference type="ChEBI" id="CHEBI:57455"/>
        <dbReference type="ChEBI" id="CHEBI:195366"/>
        <dbReference type="EC" id="3.5.4.9"/>
    </reaction>
</comment>
<comment type="pathway">
    <text evidence="2">One-carbon metabolism; tetrahydrofolate interconversion.</text>
</comment>
<comment type="subunit">
    <text evidence="2">Homodimer.</text>
</comment>
<comment type="similarity">
    <text evidence="2">Belongs to the tetrahydrofolate dehydrogenase/cyclohydrolase family.</text>
</comment>
<proteinExistence type="inferred from homology"/>
<keyword id="KW-0028">Amino-acid biosynthesis</keyword>
<keyword id="KW-0368">Histidine biosynthesis</keyword>
<keyword id="KW-0378">Hydrolase</keyword>
<keyword id="KW-0486">Methionine biosynthesis</keyword>
<keyword id="KW-0511">Multifunctional enzyme</keyword>
<keyword id="KW-0521">NADP</keyword>
<keyword id="KW-0554">One-carbon metabolism</keyword>
<keyword id="KW-0560">Oxidoreductase</keyword>
<keyword id="KW-0658">Purine biosynthesis</keyword>
<keyword id="KW-1185">Reference proteome</keyword>
<evidence type="ECO:0000250" key="1"/>
<evidence type="ECO:0000255" key="2">
    <source>
        <dbReference type="HAMAP-Rule" id="MF_01576"/>
    </source>
</evidence>